<evidence type="ECO:0000250" key="1">
    <source>
        <dbReference type="UniProtKB" id="Q7Z6I8"/>
    </source>
</evidence>
<evidence type="ECO:0000256" key="2">
    <source>
        <dbReference type="SAM" id="MobiDB-lite"/>
    </source>
</evidence>
<evidence type="ECO:0000305" key="3"/>
<sequence>MMHPVAGSNPAFCGPGKPSCLNEDAMRAADQFDLYSSQQNKYSHTVSHKPMVCQRQDPLNETHLQPTSGRNIEIKDELKKKKNLNRSGKRGRPSGTTKSAGYRTSTGRPLGTTKAAGFKTSPGRPLGTTKAAGYKVSPGRPPGSIKALSRLADLGYGCGTAAFPYPMMHSRVVHGLQETSGEVKPPSE</sequence>
<comment type="similarity">
    <text evidence="3">Belongs to the UPF0461 family.</text>
</comment>
<comment type="sequence caution" evidence="3">
    <conflict type="erroneous initiation">
        <sequence resource="EMBL-CDS" id="BAC40508"/>
    </conflict>
</comment>
<feature type="chain" id="PRO_0000295709" description="UPF0461 protein C5orf24 homolog">
    <location>
        <begin position="1"/>
        <end position="188"/>
    </location>
</feature>
<feature type="region of interest" description="Disordered" evidence="2">
    <location>
        <begin position="80"/>
        <end position="141"/>
    </location>
</feature>
<feature type="compositionally biased region" description="Basic residues" evidence="2">
    <location>
        <begin position="80"/>
        <end position="92"/>
    </location>
</feature>
<feature type="compositionally biased region" description="Polar residues" evidence="2">
    <location>
        <begin position="94"/>
        <end position="107"/>
    </location>
</feature>
<feature type="modified residue" description="Phosphoserine" evidence="1">
    <location>
        <position position="37"/>
    </location>
</feature>
<feature type="modified residue" description="Phosphoserine" evidence="1">
    <location>
        <position position="121"/>
    </location>
</feature>
<feature type="modified residue" description="Phosphoserine" evidence="1">
    <location>
        <position position="180"/>
    </location>
</feature>
<feature type="cross-link" description="Glycyl lysine isopeptide (Lys-Gly) (interchain with G-Cter in SUMO2)" evidence="1">
    <location>
        <position position="75"/>
    </location>
</feature>
<feature type="cross-link" description="Glycyl lysine isopeptide (Lys-Gly) (interchain with G-Cter in SUMO2)" evidence="1">
    <location>
        <position position="184"/>
    </location>
</feature>
<proteinExistence type="evidence at transcript level"/>
<keyword id="KW-1017">Isopeptide bond</keyword>
<keyword id="KW-0597">Phosphoprotein</keyword>
<keyword id="KW-1185">Reference proteome</keyword>
<keyword id="KW-0832">Ubl conjugation</keyword>
<reference key="1">
    <citation type="submission" date="2002-07" db="EMBL/GenBank/DDBJ databases">
        <title>Physical and hematopoietic transcript map of a 5q31 critical subregion associated with the 5q- syndrome.</title>
        <authorList>
            <person name="Konstantinopoulou V."/>
        </authorList>
    </citation>
    <scope>NUCLEOTIDE SEQUENCE [MRNA]</scope>
    <source>
        <strain>Swiss Webster / NIH</strain>
    </source>
</reference>
<reference key="2">
    <citation type="journal article" date="2004" name="Genome Res.">
        <title>The status, quality, and expansion of the NIH full-length cDNA project: the Mammalian Gene Collection (MGC).</title>
        <authorList>
            <consortium name="The MGC Project Team"/>
        </authorList>
    </citation>
    <scope>NUCLEOTIDE SEQUENCE [LARGE SCALE MRNA]</scope>
    <source>
        <strain>FVB/N</strain>
        <tissue>Colon</tissue>
    </source>
</reference>
<reference key="3">
    <citation type="journal article" date="2005" name="Science">
        <title>The transcriptional landscape of the mammalian genome.</title>
        <authorList>
            <person name="Carninci P."/>
            <person name="Kasukawa T."/>
            <person name="Katayama S."/>
            <person name="Gough J."/>
            <person name="Frith M.C."/>
            <person name="Maeda N."/>
            <person name="Oyama R."/>
            <person name="Ravasi T."/>
            <person name="Lenhard B."/>
            <person name="Wells C."/>
            <person name="Kodzius R."/>
            <person name="Shimokawa K."/>
            <person name="Bajic V.B."/>
            <person name="Brenner S.E."/>
            <person name="Batalov S."/>
            <person name="Forrest A.R."/>
            <person name="Zavolan M."/>
            <person name="Davis M.J."/>
            <person name="Wilming L.G."/>
            <person name="Aidinis V."/>
            <person name="Allen J.E."/>
            <person name="Ambesi-Impiombato A."/>
            <person name="Apweiler R."/>
            <person name="Aturaliya R.N."/>
            <person name="Bailey T.L."/>
            <person name="Bansal M."/>
            <person name="Baxter L."/>
            <person name="Beisel K.W."/>
            <person name="Bersano T."/>
            <person name="Bono H."/>
            <person name="Chalk A.M."/>
            <person name="Chiu K.P."/>
            <person name="Choudhary V."/>
            <person name="Christoffels A."/>
            <person name="Clutterbuck D.R."/>
            <person name="Crowe M.L."/>
            <person name="Dalla E."/>
            <person name="Dalrymple B.P."/>
            <person name="de Bono B."/>
            <person name="Della Gatta G."/>
            <person name="di Bernardo D."/>
            <person name="Down T."/>
            <person name="Engstrom P."/>
            <person name="Fagiolini M."/>
            <person name="Faulkner G."/>
            <person name="Fletcher C.F."/>
            <person name="Fukushima T."/>
            <person name="Furuno M."/>
            <person name="Futaki S."/>
            <person name="Gariboldi M."/>
            <person name="Georgii-Hemming P."/>
            <person name="Gingeras T.R."/>
            <person name="Gojobori T."/>
            <person name="Green R.E."/>
            <person name="Gustincich S."/>
            <person name="Harbers M."/>
            <person name="Hayashi Y."/>
            <person name="Hensch T.K."/>
            <person name="Hirokawa N."/>
            <person name="Hill D."/>
            <person name="Huminiecki L."/>
            <person name="Iacono M."/>
            <person name="Ikeo K."/>
            <person name="Iwama A."/>
            <person name="Ishikawa T."/>
            <person name="Jakt M."/>
            <person name="Kanapin A."/>
            <person name="Katoh M."/>
            <person name="Kawasawa Y."/>
            <person name="Kelso J."/>
            <person name="Kitamura H."/>
            <person name="Kitano H."/>
            <person name="Kollias G."/>
            <person name="Krishnan S.P."/>
            <person name="Kruger A."/>
            <person name="Kummerfeld S.K."/>
            <person name="Kurochkin I.V."/>
            <person name="Lareau L.F."/>
            <person name="Lazarevic D."/>
            <person name="Lipovich L."/>
            <person name="Liu J."/>
            <person name="Liuni S."/>
            <person name="McWilliam S."/>
            <person name="Madan Babu M."/>
            <person name="Madera M."/>
            <person name="Marchionni L."/>
            <person name="Matsuda H."/>
            <person name="Matsuzawa S."/>
            <person name="Miki H."/>
            <person name="Mignone F."/>
            <person name="Miyake S."/>
            <person name="Morris K."/>
            <person name="Mottagui-Tabar S."/>
            <person name="Mulder N."/>
            <person name="Nakano N."/>
            <person name="Nakauchi H."/>
            <person name="Ng P."/>
            <person name="Nilsson R."/>
            <person name="Nishiguchi S."/>
            <person name="Nishikawa S."/>
            <person name="Nori F."/>
            <person name="Ohara O."/>
            <person name="Okazaki Y."/>
            <person name="Orlando V."/>
            <person name="Pang K.C."/>
            <person name="Pavan W.J."/>
            <person name="Pavesi G."/>
            <person name="Pesole G."/>
            <person name="Petrovsky N."/>
            <person name="Piazza S."/>
            <person name="Reed J."/>
            <person name="Reid J.F."/>
            <person name="Ring B.Z."/>
            <person name="Ringwald M."/>
            <person name="Rost B."/>
            <person name="Ruan Y."/>
            <person name="Salzberg S.L."/>
            <person name="Sandelin A."/>
            <person name="Schneider C."/>
            <person name="Schoenbach C."/>
            <person name="Sekiguchi K."/>
            <person name="Semple C.A."/>
            <person name="Seno S."/>
            <person name="Sessa L."/>
            <person name="Sheng Y."/>
            <person name="Shibata Y."/>
            <person name="Shimada H."/>
            <person name="Shimada K."/>
            <person name="Silva D."/>
            <person name="Sinclair B."/>
            <person name="Sperling S."/>
            <person name="Stupka E."/>
            <person name="Sugiura K."/>
            <person name="Sultana R."/>
            <person name="Takenaka Y."/>
            <person name="Taki K."/>
            <person name="Tammoja K."/>
            <person name="Tan S.L."/>
            <person name="Tang S."/>
            <person name="Taylor M.S."/>
            <person name="Tegner J."/>
            <person name="Teichmann S.A."/>
            <person name="Ueda H.R."/>
            <person name="van Nimwegen E."/>
            <person name="Verardo R."/>
            <person name="Wei C.L."/>
            <person name="Yagi K."/>
            <person name="Yamanishi H."/>
            <person name="Zabarovsky E."/>
            <person name="Zhu S."/>
            <person name="Zimmer A."/>
            <person name="Hide W."/>
            <person name="Bult C."/>
            <person name="Grimmond S.M."/>
            <person name="Teasdale R.D."/>
            <person name="Liu E.T."/>
            <person name="Brusic V."/>
            <person name="Quackenbush J."/>
            <person name="Wahlestedt C."/>
            <person name="Mattick J.S."/>
            <person name="Hume D.A."/>
            <person name="Kai C."/>
            <person name="Sasaki D."/>
            <person name="Tomaru Y."/>
            <person name="Fukuda S."/>
            <person name="Kanamori-Katayama M."/>
            <person name="Suzuki M."/>
            <person name="Aoki J."/>
            <person name="Arakawa T."/>
            <person name="Iida J."/>
            <person name="Imamura K."/>
            <person name="Itoh M."/>
            <person name="Kato T."/>
            <person name="Kawaji H."/>
            <person name="Kawagashira N."/>
            <person name="Kawashima T."/>
            <person name="Kojima M."/>
            <person name="Kondo S."/>
            <person name="Konno H."/>
            <person name="Nakano K."/>
            <person name="Ninomiya N."/>
            <person name="Nishio T."/>
            <person name="Okada M."/>
            <person name="Plessy C."/>
            <person name="Shibata K."/>
            <person name="Shiraki T."/>
            <person name="Suzuki S."/>
            <person name="Tagami M."/>
            <person name="Waki K."/>
            <person name="Watahiki A."/>
            <person name="Okamura-Oho Y."/>
            <person name="Suzuki H."/>
            <person name="Kawai J."/>
            <person name="Hayashizaki Y."/>
        </authorList>
    </citation>
    <scope>NUCLEOTIDE SEQUENCE [LARGE SCALE MRNA] OF 1-78</scope>
    <source>
        <strain>NOD</strain>
        <tissue>Thymus</tissue>
    </source>
</reference>
<accession>Q80X32</accession>
<accession>Q8C2G2</accession>
<protein>
    <recommendedName>
        <fullName>UPF0461 protein C5orf24 homolog</fullName>
    </recommendedName>
</protein>
<organism>
    <name type="scientific">Mus musculus</name>
    <name type="common">Mouse</name>
    <dbReference type="NCBI Taxonomy" id="10090"/>
    <lineage>
        <taxon>Eukaryota</taxon>
        <taxon>Metazoa</taxon>
        <taxon>Chordata</taxon>
        <taxon>Craniata</taxon>
        <taxon>Vertebrata</taxon>
        <taxon>Euteleostomi</taxon>
        <taxon>Mammalia</taxon>
        <taxon>Eutheria</taxon>
        <taxon>Euarchontoglires</taxon>
        <taxon>Glires</taxon>
        <taxon>Rodentia</taxon>
        <taxon>Myomorpha</taxon>
        <taxon>Muroidea</taxon>
        <taxon>Muridae</taxon>
        <taxon>Murinae</taxon>
        <taxon>Mus</taxon>
        <taxon>Mus</taxon>
    </lineage>
</organism>
<name>CE024_MOUSE</name>
<dbReference type="EMBL" id="AJ492504">
    <property type="protein sequence ID" value="CAD37799.1"/>
    <property type="molecule type" value="mRNA"/>
</dbReference>
<dbReference type="EMBL" id="BC051430">
    <property type="protein sequence ID" value="AAH51430.1"/>
    <property type="molecule type" value="mRNA"/>
</dbReference>
<dbReference type="EMBL" id="AK088693">
    <property type="protein sequence ID" value="BAC40508.2"/>
    <property type="status" value="ALT_INIT"/>
    <property type="molecule type" value="mRNA"/>
</dbReference>
<dbReference type="CCDS" id="CCDS26552.1"/>
<dbReference type="RefSeq" id="NP_851795.1">
    <property type="nucleotide sequence ID" value="NM_181278.2"/>
</dbReference>
<dbReference type="FunCoup" id="Q80X32">
    <property type="interactions" value="259"/>
</dbReference>
<dbReference type="IntAct" id="Q80X32">
    <property type="interactions" value="1"/>
</dbReference>
<dbReference type="STRING" id="10090.ENSMUSP00000055271"/>
<dbReference type="iPTMnet" id="Q80X32"/>
<dbReference type="PhosphoSitePlus" id="Q80X32"/>
<dbReference type="jPOST" id="Q80X32"/>
<dbReference type="PaxDb" id="10090-ENSMUSP00000055271"/>
<dbReference type="PeptideAtlas" id="Q80X32"/>
<dbReference type="Pumba" id="Q80X32"/>
<dbReference type="Antibodypedia" id="45237">
    <property type="antibodies" value="71 antibodies from 14 providers"/>
</dbReference>
<dbReference type="DNASU" id="78521"/>
<dbReference type="Ensembl" id="ENSMUST00000057844.10">
    <property type="protein sequence ID" value="ENSMUSP00000055271.9"/>
    <property type="gene ID" value="ENSMUSG00000045767.10"/>
</dbReference>
<dbReference type="GeneID" id="78521"/>
<dbReference type="KEGG" id="mmu:78521"/>
<dbReference type="UCSC" id="uc007qrx.1">
    <property type="organism name" value="mouse"/>
</dbReference>
<dbReference type="AGR" id="MGI:1925771"/>
<dbReference type="MGI" id="MGI:1925771">
    <property type="gene designation" value="B230219D22Rik"/>
</dbReference>
<dbReference type="VEuPathDB" id="HostDB:ENSMUSG00000045767"/>
<dbReference type="eggNOG" id="ENOG502RZTV">
    <property type="taxonomic scope" value="Eukaryota"/>
</dbReference>
<dbReference type="GeneTree" id="ENSGT00390000014889"/>
<dbReference type="HOGENOM" id="CLU_090677_0_0_1"/>
<dbReference type="InParanoid" id="Q80X32"/>
<dbReference type="OMA" id="TAHFDLC"/>
<dbReference type="OrthoDB" id="10072110at2759"/>
<dbReference type="PhylomeDB" id="Q80X32"/>
<dbReference type="TreeFam" id="TF333072"/>
<dbReference type="BioGRID-ORCS" id="78521">
    <property type="hits" value="1 hit in 76 CRISPR screens"/>
</dbReference>
<dbReference type="PRO" id="PR:Q80X32"/>
<dbReference type="Proteomes" id="UP000000589">
    <property type="component" value="Chromosome 13"/>
</dbReference>
<dbReference type="RNAct" id="Q80X32">
    <property type="molecule type" value="protein"/>
</dbReference>
<dbReference type="Bgee" id="ENSMUSG00000045767">
    <property type="expression patterns" value="Expressed in dorsal pancreas and 252 other cell types or tissues"/>
</dbReference>
<dbReference type="InterPro" id="IPR040419">
    <property type="entry name" value="DUF5568"/>
</dbReference>
<dbReference type="PANTHER" id="PTHR31894">
    <property type="entry name" value="UPF0461 PROTEIN C5ORF24"/>
    <property type="match status" value="1"/>
</dbReference>
<dbReference type="PANTHER" id="PTHR31894:SF0">
    <property type="entry name" value="UPF0461 PROTEIN C5ORF24"/>
    <property type="match status" value="1"/>
</dbReference>
<dbReference type="Pfam" id="PF17724">
    <property type="entry name" value="DUF5568"/>
    <property type="match status" value="1"/>
</dbReference>